<sequence length="259" mass="28731">MPEARDRIERQVDYPAAFLNRRSHGILLDEPATQHNLFGSPVQRVPSEATGGLGSIGQGSMTGRGGLVRGNFGIRRTGGGRRGQIQFRSPQGRENMSLGVTRRGRARASNSVLPSWYPRTPLRDISAVVRAIERRRARMGEGVGRDIETPTPQQLGVLDSLVPLSGAHLEHDYSMVTPGPSIGFKRPWPPSTAKVHQILLDITRENTGEEDALTPEKKLLNSIDKVEKVVMEEIQKMKSTPSAKRAEREKRVRTLMSMR</sequence>
<comment type="function">
    <text evidence="2 3 4 5 6 7">Negative regulator of the anaphase-promoting complex/cyclosome (APC/C) ubiquitin ligase required for proper mitotic progression and cell fate determination; inhibits premature cell differentiation. Prevents DNA endoreplication by promoting the maintenance of the mitotic state by preferentially inhibiting APC/C(FZR) and triggering cyclins accumulation (e.g. CYCB1-1, CYCB1-2 and CYCA2-3) in a temporal manner. Required for megagametophyte and endosperm development. Counteracts the activity of CCS52A1 thus inhibiting the turnover of CYCA2-3. Confers immunity to bacterial pathogens (e.g. Pseudomonas syringae pv. tomato DC3000), which is associated with increased expression of disease resistance (R) genes.</text>
</comment>
<comment type="subunit">
    <text evidence="4 5">Interacts with APC/C activators such as APC5, FZR2, FZR3, CDC20.1 and CDC20.5.</text>
</comment>
<comment type="interaction">
    <interactant intactId="EBI-2130722">
        <id>O48533</id>
    </interactant>
    <interactant intactId="EBI-25506855">
        <id>O23160</id>
        <label>MYB73</label>
    </interactant>
    <organismsDiffer>false</organismsDiffer>
    <experiments>3</experiments>
</comment>
<comment type="subcellular location">
    <subcellularLocation>
        <location evidence="5">Nucleus</location>
    </subcellularLocation>
    <text>Follows a patchy nuclear accumulation pattern.</text>
</comment>
<comment type="tissue specificity">
    <text evidence="3">Expressed mainly in actively dividing cells (e.g. central cylinder of the root tip, young leaves and vascular tissues).</text>
</comment>
<comment type="developmental stage">
    <text evidence="3">Levels fade progressively in a basipetal fashion as the leaf develops.</text>
</comment>
<comment type="induction">
    <text evidence="5">Expressed in an S phase-dependent fashion.</text>
</comment>
<comment type="disruption phenotype">
    <text evidence="2 3 4 5 6">Premature occurrence of endoreplication during organ development leading to an increased DNA content in hypocotyls and trichomes associated with an increased branching of trichomes (e.g. four to five branches). Reduced accumulation of CYCA2-3 during the S phase leading to a premature exit from the cell cycle, thus triggering the onset of the endocycle. Increased tolerance towards ultraviolet B light (UVB), probably due to the enhanced polyploidization. Considerably larger average cell area in the leaf adaxial epidermis leading to fewer but larger epidermal cells.</text>
</comment>
<dbReference type="EMBL" id="AC002561">
    <property type="protein sequence ID" value="AAB88650.1"/>
    <property type="molecule type" value="Genomic_DNA"/>
</dbReference>
<dbReference type="EMBL" id="CP002685">
    <property type="protein sequence ID" value="AEC10097.1"/>
    <property type="molecule type" value="Genomic_DNA"/>
</dbReference>
<dbReference type="EMBL" id="CP002685">
    <property type="protein sequence ID" value="ANM62271.1"/>
    <property type="molecule type" value="Genomic_DNA"/>
</dbReference>
<dbReference type="EMBL" id="BT005212">
    <property type="protein sequence ID" value="AAO63276.1"/>
    <property type="molecule type" value="mRNA"/>
</dbReference>
<dbReference type="EMBL" id="AK227846">
    <property type="protein sequence ID" value="BAE99823.1"/>
    <property type="molecule type" value="mRNA"/>
</dbReference>
<dbReference type="PIR" id="T00935">
    <property type="entry name" value="T00935"/>
</dbReference>
<dbReference type="RefSeq" id="NP_001324441.1">
    <property type="nucleotide sequence ID" value="NM_001336961.1"/>
</dbReference>
<dbReference type="RefSeq" id="NP_181755.1">
    <property type="nucleotide sequence ID" value="NM_129788.3"/>
</dbReference>
<dbReference type="SMR" id="O48533"/>
<dbReference type="BioGRID" id="4164">
    <property type="interactions" value="21"/>
</dbReference>
<dbReference type="FunCoup" id="O48533">
    <property type="interactions" value="449"/>
</dbReference>
<dbReference type="IntAct" id="O48533">
    <property type="interactions" value="21"/>
</dbReference>
<dbReference type="STRING" id="3702.O48533"/>
<dbReference type="GlyGen" id="O48533">
    <property type="glycosylation" value="1 site"/>
</dbReference>
<dbReference type="PaxDb" id="3702-AT2G42260.1"/>
<dbReference type="EnsemblPlants" id="AT2G42260.1">
    <property type="protein sequence ID" value="AT2G42260.1"/>
    <property type="gene ID" value="AT2G42260"/>
</dbReference>
<dbReference type="EnsemblPlants" id="AT2G42260.2">
    <property type="protein sequence ID" value="AT2G42260.2"/>
    <property type="gene ID" value="AT2G42260"/>
</dbReference>
<dbReference type="GeneID" id="818827"/>
<dbReference type="Gramene" id="AT2G42260.1">
    <property type="protein sequence ID" value="AT2G42260.1"/>
    <property type="gene ID" value="AT2G42260"/>
</dbReference>
<dbReference type="Gramene" id="AT2G42260.2">
    <property type="protein sequence ID" value="AT2G42260.2"/>
    <property type="gene ID" value="AT2G42260"/>
</dbReference>
<dbReference type="KEGG" id="ath:AT2G42260"/>
<dbReference type="Araport" id="AT2G42260"/>
<dbReference type="TAIR" id="AT2G42260">
    <property type="gene designation" value="UVI4"/>
</dbReference>
<dbReference type="eggNOG" id="ENOG502RZ6Y">
    <property type="taxonomic scope" value="Eukaryota"/>
</dbReference>
<dbReference type="HOGENOM" id="CLU_078386_0_0_1"/>
<dbReference type="InParanoid" id="O48533"/>
<dbReference type="OMA" id="AENDGQH"/>
<dbReference type="PhylomeDB" id="O48533"/>
<dbReference type="PRO" id="PR:O48533"/>
<dbReference type="Proteomes" id="UP000006548">
    <property type="component" value="Chromosome 2"/>
</dbReference>
<dbReference type="ExpressionAtlas" id="O48533">
    <property type="expression patterns" value="baseline and differential"/>
</dbReference>
<dbReference type="GO" id="GO:0005634">
    <property type="term" value="C:nucleus"/>
    <property type="evidence" value="ECO:0000314"/>
    <property type="project" value="TAIR"/>
</dbReference>
<dbReference type="GO" id="GO:0051301">
    <property type="term" value="P:cell division"/>
    <property type="evidence" value="ECO:0007669"/>
    <property type="project" value="UniProtKB-KW"/>
</dbReference>
<dbReference type="GO" id="GO:0006952">
    <property type="term" value="P:defense response"/>
    <property type="evidence" value="ECO:0007669"/>
    <property type="project" value="UniProtKB-KW"/>
</dbReference>
<dbReference type="GO" id="GO:0042023">
    <property type="term" value="P:DNA endoreduplication"/>
    <property type="evidence" value="ECO:0000315"/>
    <property type="project" value="TAIR"/>
</dbReference>
<dbReference type="GO" id="GO:0009960">
    <property type="term" value="P:endosperm development"/>
    <property type="evidence" value="ECO:0000315"/>
    <property type="project" value="UniProtKB"/>
</dbReference>
<dbReference type="GO" id="GO:0009561">
    <property type="term" value="P:megagametogenesis"/>
    <property type="evidence" value="ECO:0000315"/>
    <property type="project" value="UniProtKB"/>
</dbReference>
<dbReference type="GO" id="GO:1904667">
    <property type="term" value="P:negative regulation of ubiquitin protein ligase activity"/>
    <property type="evidence" value="ECO:0000315"/>
    <property type="project" value="UniProtKB"/>
</dbReference>
<dbReference type="GO" id="GO:1900426">
    <property type="term" value="P:positive regulation of defense response to bacterium"/>
    <property type="evidence" value="ECO:0000315"/>
    <property type="project" value="UniProtKB"/>
</dbReference>
<dbReference type="GO" id="GO:0051783">
    <property type="term" value="P:regulation of nuclear division"/>
    <property type="evidence" value="ECO:0007669"/>
    <property type="project" value="InterPro"/>
</dbReference>
<dbReference type="GO" id="GO:0010224">
    <property type="term" value="P:response to UV-B"/>
    <property type="evidence" value="ECO:0000315"/>
    <property type="project" value="TAIR"/>
</dbReference>
<dbReference type="GO" id="GO:0010091">
    <property type="term" value="P:trichome branching"/>
    <property type="evidence" value="ECO:0000315"/>
    <property type="project" value="TAIR"/>
</dbReference>
<dbReference type="InterPro" id="IPR034590">
    <property type="entry name" value="POLYCHOME/GIG1"/>
</dbReference>
<dbReference type="PANTHER" id="PTHR35119">
    <property type="entry name" value="PROTEIN POLYCHOME"/>
    <property type="match status" value="1"/>
</dbReference>
<dbReference type="PANTHER" id="PTHR35119:SF1">
    <property type="entry name" value="PROTEIN POLYCHOME"/>
    <property type="match status" value="1"/>
</dbReference>
<evidence type="ECO:0000256" key="1">
    <source>
        <dbReference type="SAM" id="MobiDB-lite"/>
    </source>
</evidence>
<evidence type="ECO:0000269" key="2">
    <source>
    </source>
</evidence>
<evidence type="ECO:0000269" key="3">
    <source>
    </source>
</evidence>
<evidence type="ECO:0000269" key="4">
    <source>
    </source>
</evidence>
<evidence type="ECO:0000269" key="5">
    <source>
    </source>
</evidence>
<evidence type="ECO:0000269" key="6">
    <source>
    </source>
</evidence>
<evidence type="ECO:0000269" key="7">
    <source>
    </source>
</evidence>
<protein>
    <recommendedName>
        <fullName>Protein POLYCHOME</fullName>
    </recommendedName>
    <alternativeName>
        <fullName>Protein UV-B-INSENSITIVE 4</fullName>
    </alternativeName>
</protein>
<organism>
    <name type="scientific">Arabidopsis thaliana</name>
    <name type="common">Mouse-ear cress</name>
    <dbReference type="NCBI Taxonomy" id="3702"/>
    <lineage>
        <taxon>Eukaryota</taxon>
        <taxon>Viridiplantae</taxon>
        <taxon>Streptophyta</taxon>
        <taxon>Embryophyta</taxon>
        <taxon>Tracheophyta</taxon>
        <taxon>Spermatophyta</taxon>
        <taxon>Magnoliopsida</taxon>
        <taxon>eudicotyledons</taxon>
        <taxon>Gunneridae</taxon>
        <taxon>Pentapetalae</taxon>
        <taxon>rosids</taxon>
        <taxon>malvids</taxon>
        <taxon>Brassicales</taxon>
        <taxon>Brassicaceae</taxon>
        <taxon>Camelineae</taxon>
        <taxon>Arabidopsis</taxon>
    </lineage>
</organism>
<gene>
    <name type="primary">PYM</name>
    <name type="synonym">UVI4</name>
    <name type="ordered locus">At2g42260</name>
    <name type="ORF">T24P15.17</name>
</gene>
<accession>O48533</accession>
<feature type="chain" id="PRO_0000423305" description="Protein POLYCHOME">
    <location>
        <begin position="1"/>
        <end position="259"/>
    </location>
</feature>
<feature type="region of interest" description="Disordered" evidence="1">
    <location>
        <begin position="236"/>
        <end position="259"/>
    </location>
</feature>
<feature type="mutagenesis site" description="Can complement disruption phenotype." evidence="5">
    <original>RGGL</original>
    <variation>AGGA</variation>
    <location>
        <begin position="64"/>
        <end position="67"/>
    </location>
</feature>
<feature type="mutagenesis site" description="Impaired interaction with FZR2. Cannot complement disruption phenotype." evidence="5">
    <original>GREN</original>
    <variation>ARAA</variation>
    <location>
        <begin position="92"/>
        <end position="95"/>
    </location>
</feature>
<feature type="mutagenesis site" description="Impaired interaction with FZR2. Can complement disruption phenotype." evidence="5">
    <original>RTPL</original>
    <variation>ATPA</variation>
    <location>
        <begin position="119"/>
        <end position="122"/>
    </location>
</feature>
<feature type="mutagenesis site" description="Impaired interaction with FZR2. Cannot complement disruption phenotype." evidence="5">
    <location>
        <begin position="258"/>
        <end position="259"/>
    </location>
</feature>
<proteinExistence type="evidence at protein level"/>
<keyword id="KW-0131">Cell cycle</keyword>
<keyword id="KW-0132">Cell division</keyword>
<keyword id="KW-0217">Developmental protein</keyword>
<keyword id="KW-0235">DNA replication</keyword>
<keyword id="KW-0498">Mitosis</keyword>
<keyword id="KW-0539">Nucleus</keyword>
<keyword id="KW-0611">Plant defense</keyword>
<keyword id="KW-1185">Reference proteome</keyword>
<reference key="1">
    <citation type="journal article" date="1999" name="Nature">
        <title>Sequence and analysis of chromosome 2 of the plant Arabidopsis thaliana.</title>
        <authorList>
            <person name="Lin X."/>
            <person name="Kaul S."/>
            <person name="Rounsley S.D."/>
            <person name="Shea T.P."/>
            <person name="Benito M.-I."/>
            <person name="Town C.D."/>
            <person name="Fujii C.Y."/>
            <person name="Mason T.M."/>
            <person name="Bowman C.L."/>
            <person name="Barnstead M.E."/>
            <person name="Feldblyum T.V."/>
            <person name="Buell C.R."/>
            <person name="Ketchum K.A."/>
            <person name="Lee J.J."/>
            <person name="Ronning C.M."/>
            <person name="Koo H.L."/>
            <person name="Moffat K.S."/>
            <person name="Cronin L.A."/>
            <person name="Shen M."/>
            <person name="Pai G."/>
            <person name="Van Aken S."/>
            <person name="Umayam L."/>
            <person name="Tallon L.J."/>
            <person name="Gill J.E."/>
            <person name="Adams M.D."/>
            <person name="Carrera A.J."/>
            <person name="Creasy T.H."/>
            <person name="Goodman H.M."/>
            <person name="Somerville C.R."/>
            <person name="Copenhaver G.P."/>
            <person name="Preuss D."/>
            <person name="Nierman W.C."/>
            <person name="White O."/>
            <person name="Eisen J.A."/>
            <person name="Salzberg S.L."/>
            <person name="Fraser C.M."/>
            <person name="Venter J.C."/>
        </authorList>
    </citation>
    <scope>NUCLEOTIDE SEQUENCE [LARGE SCALE GENOMIC DNA]</scope>
    <source>
        <strain>cv. Columbia</strain>
    </source>
</reference>
<reference key="2">
    <citation type="journal article" date="2017" name="Plant J.">
        <title>Araport11: a complete reannotation of the Arabidopsis thaliana reference genome.</title>
        <authorList>
            <person name="Cheng C.Y."/>
            <person name="Krishnakumar V."/>
            <person name="Chan A.P."/>
            <person name="Thibaud-Nissen F."/>
            <person name="Schobel S."/>
            <person name="Town C.D."/>
        </authorList>
    </citation>
    <scope>GENOME REANNOTATION</scope>
    <source>
        <strain>cv. Columbia</strain>
    </source>
</reference>
<reference key="3">
    <citation type="journal article" date="2003" name="Science">
        <title>Empirical analysis of transcriptional activity in the Arabidopsis genome.</title>
        <authorList>
            <person name="Yamada K."/>
            <person name="Lim J."/>
            <person name="Dale J.M."/>
            <person name="Chen H."/>
            <person name="Shinn P."/>
            <person name="Palm C.J."/>
            <person name="Southwick A.M."/>
            <person name="Wu H.C."/>
            <person name="Kim C.J."/>
            <person name="Nguyen M."/>
            <person name="Pham P.K."/>
            <person name="Cheuk R.F."/>
            <person name="Karlin-Newmann G."/>
            <person name="Liu S.X."/>
            <person name="Lam B."/>
            <person name="Sakano H."/>
            <person name="Wu T."/>
            <person name="Yu G."/>
            <person name="Miranda M."/>
            <person name="Quach H.L."/>
            <person name="Tripp M."/>
            <person name="Chang C.H."/>
            <person name="Lee J.M."/>
            <person name="Toriumi M.J."/>
            <person name="Chan M.M."/>
            <person name="Tang C.C."/>
            <person name="Onodera C.S."/>
            <person name="Deng J.M."/>
            <person name="Akiyama K."/>
            <person name="Ansari Y."/>
            <person name="Arakawa T."/>
            <person name="Banh J."/>
            <person name="Banno F."/>
            <person name="Bowser L."/>
            <person name="Brooks S.Y."/>
            <person name="Carninci P."/>
            <person name="Chao Q."/>
            <person name="Choy N."/>
            <person name="Enju A."/>
            <person name="Goldsmith A.D."/>
            <person name="Gurjal M."/>
            <person name="Hansen N.F."/>
            <person name="Hayashizaki Y."/>
            <person name="Johnson-Hopson C."/>
            <person name="Hsuan V.W."/>
            <person name="Iida K."/>
            <person name="Karnes M."/>
            <person name="Khan S."/>
            <person name="Koesema E."/>
            <person name="Ishida J."/>
            <person name="Jiang P.X."/>
            <person name="Jones T."/>
            <person name="Kawai J."/>
            <person name="Kamiya A."/>
            <person name="Meyers C."/>
            <person name="Nakajima M."/>
            <person name="Narusaka M."/>
            <person name="Seki M."/>
            <person name="Sakurai T."/>
            <person name="Satou M."/>
            <person name="Tamse R."/>
            <person name="Vaysberg M."/>
            <person name="Wallender E.K."/>
            <person name="Wong C."/>
            <person name="Yamamura Y."/>
            <person name="Yuan S."/>
            <person name="Shinozaki K."/>
            <person name="Davis R.W."/>
            <person name="Theologis A."/>
            <person name="Ecker J.R."/>
        </authorList>
    </citation>
    <scope>NUCLEOTIDE SEQUENCE [LARGE SCALE MRNA]</scope>
    <source>
        <strain>cv. Columbia</strain>
    </source>
</reference>
<reference key="4">
    <citation type="submission" date="2006-07" db="EMBL/GenBank/DDBJ databases">
        <title>Large-scale analysis of RIKEN Arabidopsis full-length (RAFL) cDNAs.</title>
        <authorList>
            <person name="Totoki Y."/>
            <person name="Seki M."/>
            <person name="Ishida J."/>
            <person name="Nakajima M."/>
            <person name="Enju A."/>
            <person name="Kamiya A."/>
            <person name="Narusaka M."/>
            <person name="Shin-i T."/>
            <person name="Nakagawa M."/>
            <person name="Sakamoto N."/>
            <person name="Oishi K."/>
            <person name="Kohara Y."/>
            <person name="Kobayashi M."/>
            <person name="Toyoda A."/>
            <person name="Sakaki Y."/>
            <person name="Sakurai T."/>
            <person name="Iida K."/>
            <person name="Akiyama K."/>
            <person name="Satou M."/>
            <person name="Toyoda T."/>
            <person name="Konagaya A."/>
            <person name="Carninci P."/>
            <person name="Kawai J."/>
            <person name="Hayashizaki Y."/>
            <person name="Shinozaki K."/>
        </authorList>
    </citation>
    <scope>NUCLEOTIDE SEQUENCE [LARGE SCALE MRNA]</scope>
    <source>
        <strain>cv. Columbia</strain>
    </source>
</reference>
<reference key="5">
    <citation type="journal article" date="1999" name="Genetics">
        <title>Trichome cell growth in Arabidopsis thaliana can be derepressed by mutations in at least five genes.</title>
        <authorList>
            <person name="Perazza D."/>
            <person name="Herzog M."/>
            <person name="Huelskamp M."/>
            <person name="Brown S."/>
            <person name="Dorne A.-M."/>
            <person name="Bonneville J.-M."/>
        </authorList>
    </citation>
    <scope>FUNCTION</scope>
    <scope>DISRUPTION PHENOTYPE</scope>
    <source>
        <strain>cv. Landsberg erecta</strain>
    </source>
</reference>
<reference key="6">
    <citation type="journal article" date="2006" name="Plant J.">
        <title>A mutation in the uvi4 gene promotes progression of endo-reduplication and confers increased tolerance towards ultraviolet B light.</title>
        <authorList>
            <person name="Hase Y."/>
            <person name="Trung K.H."/>
            <person name="Matsunaga T."/>
            <person name="Tanaka A."/>
        </authorList>
    </citation>
    <scope>FUNCTION</scope>
    <scope>DISRUPTION PHENOTYPE</scope>
    <scope>TISSUE SPECIFICITY</scope>
    <scope>DEVELOPMENTAL STAGE</scope>
</reference>
<reference key="7">
    <citation type="journal article" date="2011" name="Plant Cell">
        <title>GIGAS CELL1, a novel negative regulator of the anaphase-promoting complex/cyclosome, is required for proper mitotic progression and cell fate determination in Arabidopsis.</title>
        <authorList>
            <person name="Iwata E."/>
            <person name="Ikeda S."/>
            <person name="Matsunaga S."/>
            <person name="Kurata M."/>
            <person name="Yoshioka Y."/>
            <person name="Criqui M.-C."/>
            <person name="Genschik P."/>
            <person name="Ito M."/>
        </authorList>
    </citation>
    <scope>FUNCTION</scope>
    <scope>DISRUPTION PHENOTYPE</scope>
    <scope>INTERACTION WITH FZR2; FZR3; CDC20.1 AND CDC20.5</scope>
</reference>
<reference key="8">
    <citation type="journal article" date="2011" name="Plant Cell">
        <title>Arabidopsis ULTRAVIOLET-B-INSENSITIVE4 maintains cell division activity by temporal inhibition of the anaphase-promoting complex/cyclosome.</title>
        <authorList>
            <person name="Heyman J."/>
            <person name="Van den Daele H."/>
            <person name="De Wit K."/>
            <person name="Boudolf V."/>
            <person name="Berckmans B."/>
            <person name="Verkest A."/>
            <person name="Alvim Kamei C.L."/>
            <person name="De Jaeger G."/>
            <person name="Koncz C."/>
            <person name="De Veylder L."/>
        </authorList>
    </citation>
    <scope>FUNCTION</scope>
    <scope>DISRUPTION PHENOTYPE</scope>
    <scope>MUTAGENESIS OF 64-ARG--LEU-67; 92-GLY--ASN-95; 119-ARG--LEU-122 AND 258-MET-ARG-259</scope>
    <scope>INDUCTION</scope>
    <scope>INTERACTION WITH FZR2 AND APC5</scope>
    <scope>SUBCELLULAR LOCATION</scope>
</reference>
<reference key="9">
    <citation type="journal article" date="2012" name="Plant Signal. Behav.">
        <title>Roles of GIG1 and UVI4 in genome duplication in Arabidopsis thaliana.</title>
        <authorList>
            <person name="Iwata E."/>
            <person name="Ikeda S."/>
            <person name="Abe N."/>
            <person name="Kobayashi A."/>
            <person name="Kurata M."/>
            <person name="Matsunaga S."/>
            <person name="Yoshioka Y."/>
            <person name="Criqui M.C."/>
            <person name="Genschik P."/>
            <person name="Ito M."/>
        </authorList>
    </citation>
    <scope>FUNCTION</scope>
    <scope>DISRUPTION PHENOTYPE</scope>
</reference>
<reference key="10">
    <citation type="journal article" date="2013" name="Proc. Natl. Acad. Sci. U.S.A.">
        <title>Perturbation of cell cycle regulation triggers plant immune response via activation of disease resistance genes.</title>
        <authorList>
            <person name="Bao Z."/>
            <person name="Yang H."/>
            <person name="Hua J."/>
        </authorList>
    </citation>
    <scope>FUNCTION</scope>
    <source>
        <strain>cv. Columbia</strain>
    </source>
</reference>
<name>PYM_ARATH</name>